<organism>
    <name type="scientific">Gloeobacter violaceus (strain ATCC 29082 / PCC 7421)</name>
    <dbReference type="NCBI Taxonomy" id="251221"/>
    <lineage>
        <taxon>Bacteria</taxon>
        <taxon>Bacillati</taxon>
        <taxon>Cyanobacteriota</taxon>
        <taxon>Cyanophyceae</taxon>
        <taxon>Gloeobacterales</taxon>
        <taxon>Gloeobacteraceae</taxon>
        <taxon>Gloeobacter</taxon>
    </lineage>
</organism>
<gene>
    <name evidence="1" type="primary">rpsB</name>
    <name evidence="1" type="synonym">rps2</name>
    <name type="ordered locus">gll1830</name>
</gene>
<accession>Q7NJK2</accession>
<sequence>MSVVSLPQMLEAGVHFGHQTRRWNPKMRRYIFTDRNGIHIIDLTQTAHLLDEAYSYLREASDQGKKILFVGTKRQAAPVIAQEAKRCGMFWVNQRWLGGMLTNWDTIRTSVDQLKELETMEANGTLDLLPKKEASVTRKKLERLTKYLGGLKNMRRKPDILLVVDQRREQNAVMEARRLNIPIVSLLDTNCDPDLTDVGIPANDDAIRSIRLIVGKLADAIYEGRHGQLEDFSEEEPVPAAAPVAAVAVAVAAPAEAESEDKGEVLYSFDDEEE</sequence>
<comment type="similarity">
    <text evidence="1">Belongs to the universal ribosomal protein uS2 family.</text>
</comment>
<name>RS2_GLOVI</name>
<dbReference type="EMBL" id="BA000045">
    <property type="protein sequence ID" value="BAC89771.1"/>
    <property type="molecule type" value="Genomic_DNA"/>
</dbReference>
<dbReference type="RefSeq" id="NP_924776.1">
    <property type="nucleotide sequence ID" value="NC_005125.1"/>
</dbReference>
<dbReference type="RefSeq" id="WP_011141828.1">
    <property type="nucleotide sequence ID" value="NC_005125.1"/>
</dbReference>
<dbReference type="SMR" id="Q7NJK2"/>
<dbReference type="FunCoup" id="Q7NJK2">
    <property type="interactions" value="307"/>
</dbReference>
<dbReference type="STRING" id="251221.gene:10759322"/>
<dbReference type="EnsemblBacteria" id="BAC89771">
    <property type="protein sequence ID" value="BAC89771"/>
    <property type="gene ID" value="BAC89771"/>
</dbReference>
<dbReference type="KEGG" id="gvi:gll1830"/>
<dbReference type="PATRIC" id="fig|251221.4.peg.1861"/>
<dbReference type="eggNOG" id="COG0052">
    <property type="taxonomic scope" value="Bacteria"/>
</dbReference>
<dbReference type="HOGENOM" id="CLU_040318_1_2_3"/>
<dbReference type="InParanoid" id="Q7NJK2"/>
<dbReference type="OrthoDB" id="9808036at2"/>
<dbReference type="PhylomeDB" id="Q7NJK2"/>
<dbReference type="Proteomes" id="UP000000557">
    <property type="component" value="Chromosome"/>
</dbReference>
<dbReference type="GO" id="GO:0022627">
    <property type="term" value="C:cytosolic small ribosomal subunit"/>
    <property type="evidence" value="ECO:0000318"/>
    <property type="project" value="GO_Central"/>
</dbReference>
<dbReference type="GO" id="GO:0003735">
    <property type="term" value="F:structural constituent of ribosome"/>
    <property type="evidence" value="ECO:0000318"/>
    <property type="project" value="GO_Central"/>
</dbReference>
<dbReference type="GO" id="GO:0006412">
    <property type="term" value="P:translation"/>
    <property type="evidence" value="ECO:0007669"/>
    <property type="project" value="UniProtKB-UniRule"/>
</dbReference>
<dbReference type="CDD" id="cd01425">
    <property type="entry name" value="RPS2"/>
    <property type="match status" value="1"/>
</dbReference>
<dbReference type="FunFam" id="1.10.287.610:FF:000001">
    <property type="entry name" value="30S ribosomal protein S2"/>
    <property type="match status" value="1"/>
</dbReference>
<dbReference type="Gene3D" id="3.40.50.10490">
    <property type="entry name" value="Glucose-6-phosphate isomerase like protein, domain 1"/>
    <property type="match status" value="1"/>
</dbReference>
<dbReference type="Gene3D" id="1.10.287.610">
    <property type="entry name" value="Helix hairpin bin"/>
    <property type="match status" value="1"/>
</dbReference>
<dbReference type="HAMAP" id="MF_00291_B">
    <property type="entry name" value="Ribosomal_uS2_B"/>
    <property type="match status" value="1"/>
</dbReference>
<dbReference type="InterPro" id="IPR001865">
    <property type="entry name" value="Ribosomal_uS2"/>
</dbReference>
<dbReference type="InterPro" id="IPR005706">
    <property type="entry name" value="Ribosomal_uS2_bac/mit/plastid"/>
</dbReference>
<dbReference type="InterPro" id="IPR018130">
    <property type="entry name" value="Ribosomal_uS2_CS"/>
</dbReference>
<dbReference type="InterPro" id="IPR023591">
    <property type="entry name" value="Ribosomal_uS2_flav_dom_sf"/>
</dbReference>
<dbReference type="NCBIfam" id="TIGR01011">
    <property type="entry name" value="rpsB_bact"/>
    <property type="match status" value="1"/>
</dbReference>
<dbReference type="PANTHER" id="PTHR12534">
    <property type="entry name" value="30S RIBOSOMAL PROTEIN S2 PROKARYOTIC AND ORGANELLAR"/>
    <property type="match status" value="1"/>
</dbReference>
<dbReference type="PANTHER" id="PTHR12534:SF0">
    <property type="entry name" value="SMALL RIBOSOMAL SUBUNIT PROTEIN US2M"/>
    <property type="match status" value="1"/>
</dbReference>
<dbReference type="Pfam" id="PF00318">
    <property type="entry name" value="Ribosomal_S2"/>
    <property type="match status" value="1"/>
</dbReference>
<dbReference type="PRINTS" id="PR00395">
    <property type="entry name" value="RIBOSOMALS2"/>
</dbReference>
<dbReference type="SUPFAM" id="SSF52313">
    <property type="entry name" value="Ribosomal protein S2"/>
    <property type="match status" value="1"/>
</dbReference>
<dbReference type="PROSITE" id="PS00962">
    <property type="entry name" value="RIBOSOMAL_S2_1"/>
    <property type="match status" value="1"/>
</dbReference>
<dbReference type="PROSITE" id="PS00963">
    <property type="entry name" value="RIBOSOMAL_S2_2"/>
    <property type="match status" value="1"/>
</dbReference>
<keyword id="KW-1185">Reference proteome</keyword>
<keyword id="KW-0687">Ribonucleoprotein</keyword>
<keyword id="KW-0689">Ribosomal protein</keyword>
<evidence type="ECO:0000255" key="1">
    <source>
        <dbReference type="HAMAP-Rule" id="MF_00291"/>
    </source>
</evidence>
<evidence type="ECO:0000256" key="2">
    <source>
        <dbReference type="SAM" id="MobiDB-lite"/>
    </source>
</evidence>
<evidence type="ECO:0000305" key="3"/>
<reference key="1">
    <citation type="journal article" date="2003" name="DNA Res.">
        <title>Complete genome structure of Gloeobacter violaceus PCC 7421, a cyanobacterium that lacks thylakoids.</title>
        <authorList>
            <person name="Nakamura Y."/>
            <person name="Kaneko T."/>
            <person name="Sato S."/>
            <person name="Mimuro M."/>
            <person name="Miyashita H."/>
            <person name="Tsuchiya T."/>
            <person name="Sasamoto S."/>
            <person name="Watanabe A."/>
            <person name="Kawashima K."/>
            <person name="Kishida Y."/>
            <person name="Kiyokawa C."/>
            <person name="Kohara M."/>
            <person name="Matsumoto M."/>
            <person name="Matsuno A."/>
            <person name="Nakazaki N."/>
            <person name="Shimpo S."/>
            <person name="Takeuchi C."/>
            <person name="Yamada M."/>
            <person name="Tabata S."/>
        </authorList>
    </citation>
    <scope>NUCLEOTIDE SEQUENCE [LARGE SCALE GENOMIC DNA]</scope>
    <source>
        <strain>ATCC 29082 / PCC 7421</strain>
    </source>
</reference>
<protein>
    <recommendedName>
        <fullName evidence="1">Small ribosomal subunit protein uS2</fullName>
    </recommendedName>
    <alternativeName>
        <fullName evidence="3">30S ribosomal protein S2</fullName>
    </alternativeName>
</protein>
<proteinExistence type="inferred from homology"/>
<feature type="chain" id="PRO_0000134174" description="Small ribosomal subunit protein uS2">
    <location>
        <begin position="1"/>
        <end position="274"/>
    </location>
</feature>
<feature type="region of interest" description="Disordered" evidence="2">
    <location>
        <begin position="255"/>
        <end position="274"/>
    </location>
</feature>